<comment type="function">
    <text evidence="1">May play a role in DNA repair. It seems to be involved in an RecBC-independent recombinational process of DNA repair. It may act with RecF and RecO.</text>
</comment>
<comment type="similarity">
    <text evidence="1">Belongs to the RecR family.</text>
</comment>
<keyword id="KW-0227">DNA damage</keyword>
<keyword id="KW-0233">DNA recombination</keyword>
<keyword id="KW-0234">DNA repair</keyword>
<keyword id="KW-0479">Metal-binding</keyword>
<keyword id="KW-1185">Reference proteome</keyword>
<keyword id="KW-0862">Zinc</keyword>
<keyword id="KW-0863">Zinc-finger</keyword>
<feature type="chain" id="PRO_1000001631" description="Recombination protein RecR">
    <location>
        <begin position="1"/>
        <end position="198"/>
    </location>
</feature>
<feature type="domain" description="Toprim" evidence="1">
    <location>
        <begin position="80"/>
        <end position="175"/>
    </location>
</feature>
<feature type="zinc finger region" description="C4-type" evidence="1">
    <location>
        <begin position="57"/>
        <end position="72"/>
    </location>
</feature>
<reference key="1">
    <citation type="journal article" date="2007" name="J. Bacteriol.">
        <title>Genome of the opportunistic pathogen Streptococcus sanguinis.</title>
        <authorList>
            <person name="Xu P."/>
            <person name="Alves J.M."/>
            <person name="Kitten T."/>
            <person name="Brown A."/>
            <person name="Chen Z."/>
            <person name="Ozaki L.S."/>
            <person name="Manque P."/>
            <person name="Ge X."/>
            <person name="Serrano M.G."/>
            <person name="Puiu D."/>
            <person name="Hendricks S."/>
            <person name="Wang Y."/>
            <person name="Chaplin M.D."/>
            <person name="Akan D."/>
            <person name="Paik S."/>
            <person name="Peterson D.L."/>
            <person name="Macrina F.L."/>
            <person name="Buck G.A."/>
        </authorList>
    </citation>
    <scope>NUCLEOTIDE SEQUENCE [LARGE SCALE GENOMIC DNA]</scope>
    <source>
        <strain>SK36</strain>
    </source>
</reference>
<organism>
    <name type="scientific">Streptococcus sanguinis (strain SK36)</name>
    <dbReference type="NCBI Taxonomy" id="388919"/>
    <lineage>
        <taxon>Bacteria</taxon>
        <taxon>Bacillati</taxon>
        <taxon>Bacillota</taxon>
        <taxon>Bacilli</taxon>
        <taxon>Lactobacillales</taxon>
        <taxon>Streptococcaceae</taxon>
        <taxon>Streptococcus</taxon>
    </lineage>
</organism>
<proteinExistence type="inferred from homology"/>
<evidence type="ECO:0000255" key="1">
    <source>
        <dbReference type="HAMAP-Rule" id="MF_00017"/>
    </source>
</evidence>
<dbReference type="EMBL" id="CP000387">
    <property type="protein sequence ID" value="ABN44127.1"/>
    <property type="molecule type" value="Genomic_DNA"/>
</dbReference>
<dbReference type="RefSeq" id="WP_002897999.1">
    <property type="nucleotide sequence ID" value="NC_009009.1"/>
</dbReference>
<dbReference type="RefSeq" id="YP_001034677.1">
    <property type="nucleotide sequence ID" value="NC_009009.1"/>
</dbReference>
<dbReference type="SMR" id="A3CLS2"/>
<dbReference type="STRING" id="388919.SSA_0690"/>
<dbReference type="GeneID" id="48425112"/>
<dbReference type="KEGG" id="ssa:SSA_0690"/>
<dbReference type="PATRIC" id="fig|388919.9.peg.664"/>
<dbReference type="eggNOG" id="COG0353">
    <property type="taxonomic scope" value="Bacteria"/>
</dbReference>
<dbReference type="HOGENOM" id="CLU_060739_1_0_9"/>
<dbReference type="OrthoDB" id="9802672at2"/>
<dbReference type="Proteomes" id="UP000002148">
    <property type="component" value="Chromosome"/>
</dbReference>
<dbReference type="GO" id="GO:0003677">
    <property type="term" value="F:DNA binding"/>
    <property type="evidence" value="ECO:0007669"/>
    <property type="project" value="UniProtKB-UniRule"/>
</dbReference>
<dbReference type="GO" id="GO:0008270">
    <property type="term" value="F:zinc ion binding"/>
    <property type="evidence" value="ECO:0007669"/>
    <property type="project" value="UniProtKB-KW"/>
</dbReference>
<dbReference type="GO" id="GO:0006310">
    <property type="term" value="P:DNA recombination"/>
    <property type="evidence" value="ECO:0007669"/>
    <property type="project" value="UniProtKB-UniRule"/>
</dbReference>
<dbReference type="GO" id="GO:0006281">
    <property type="term" value="P:DNA repair"/>
    <property type="evidence" value="ECO:0007669"/>
    <property type="project" value="UniProtKB-UniRule"/>
</dbReference>
<dbReference type="CDD" id="cd01025">
    <property type="entry name" value="TOPRIM_recR"/>
    <property type="match status" value="1"/>
</dbReference>
<dbReference type="Gene3D" id="3.30.60.80">
    <property type="match status" value="1"/>
</dbReference>
<dbReference type="Gene3D" id="3.40.1360.10">
    <property type="match status" value="1"/>
</dbReference>
<dbReference type="Gene3D" id="6.10.250.240">
    <property type="match status" value="1"/>
</dbReference>
<dbReference type="Gene3D" id="1.10.8.420">
    <property type="entry name" value="RecR Domain 1"/>
    <property type="match status" value="1"/>
</dbReference>
<dbReference type="HAMAP" id="MF_00017">
    <property type="entry name" value="RecR"/>
    <property type="match status" value="1"/>
</dbReference>
<dbReference type="InterPro" id="IPR000093">
    <property type="entry name" value="DNA_Rcmb_RecR"/>
</dbReference>
<dbReference type="InterPro" id="IPR023627">
    <property type="entry name" value="Rcmb_RecR"/>
</dbReference>
<dbReference type="InterPro" id="IPR015967">
    <property type="entry name" value="Rcmb_RecR_Znf"/>
</dbReference>
<dbReference type="InterPro" id="IPR006171">
    <property type="entry name" value="TOPRIM_dom"/>
</dbReference>
<dbReference type="InterPro" id="IPR034137">
    <property type="entry name" value="TOPRIM_RecR"/>
</dbReference>
<dbReference type="NCBIfam" id="TIGR00615">
    <property type="entry name" value="recR"/>
    <property type="match status" value="1"/>
</dbReference>
<dbReference type="PANTHER" id="PTHR30446">
    <property type="entry name" value="RECOMBINATION PROTEIN RECR"/>
    <property type="match status" value="1"/>
</dbReference>
<dbReference type="PANTHER" id="PTHR30446:SF0">
    <property type="entry name" value="RECOMBINATION PROTEIN RECR"/>
    <property type="match status" value="1"/>
</dbReference>
<dbReference type="Pfam" id="PF21175">
    <property type="entry name" value="RecR_C"/>
    <property type="match status" value="1"/>
</dbReference>
<dbReference type="Pfam" id="PF21176">
    <property type="entry name" value="RecR_HhH"/>
    <property type="match status" value="1"/>
</dbReference>
<dbReference type="Pfam" id="PF02132">
    <property type="entry name" value="RecR_ZnF"/>
    <property type="match status" value="1"/>
</dbReference>
<dbReference type="Pfam" id="PF13662">
    <property type="entry name" value="Toprim_4"/>
    <property type="match status" value="1"/>
</dbReference>
<dbReference type="SMART" id="SM00493">
    <property type="entry name" value="TOPRIM"/>
    <property type="match status" value="1"/>
</dbReference>
<dbReference type="SUPFAM" id="SSF111304">
    <property type="entry name" value="Recombination protein RecR"/>
    <property type="match status" value="1"/>
</dbReference>
<dbReference type="PROSITE" id="PS01300">
    <property type="entry name" value="RECR"/>
    <property type="match status" value="1"/>
</dbReference>
<dbReference type="PROSITE" id="PS50880">
    <property type="entry name" value="TOPRIM"/>
    <property type="match status" value="1"/>
</dbReference>
<gene>
    <name evidence="1" type="primary">recR</name>
    <name type="ordered locus">SSA_0690</name>
</gene>
<sequence length="198" mass="21629">MLYPTPIAKLIDSFSKLPGIGIKTATRLAFYTIGMSDDDVNEFAKNLLAAKRELSYCSVCGNLTDEDPCAICQDQSRDQSTILIVEDSRDVSAMENIQEYHGLYHVLHGLISPMNGVGPDDINLKSLITRLMDSEVTEVIVATNATADGEATSMYISRVLKPAGIKVTRLARGLAVGSDIEYADEVTLIRAIENRTEL</sequence>
<protein>
    <recommendedName>
        <fullName evidence="1">Recombination protein RecR</fullName>
    </recommendedName>
</protein>
<name>RECR_STRSV</name>
<accession>A3CLS2</accession>